<organism>
    <name type="scientific">Volvox carteri</name>
    <name type="common">Green alga</name>
    <dbReference type="NCBI Taxonomy" id="3067"/>
    <lineage>
        <taxon>Eukaryota</taxon>
        <taxon>Viridiplantae</taxon>
        <taxon>Chlorophyta</taxon>
        <taxon>core chlorophytes</taxon>
        <taxon>Chlorophyceae</taxon>
        <taxon>CS clade</taxon>
        <taxon>Chlamydomonadales</taxon>
        <taxon>Volvocaceae</taxon>
        <taxon>Volvox</taxon>
    </lineage>
</organism>
<protein>
    <recommendedName>
        <fullName>Histone H2B.4</fullName>
    </recommendedName>
    <alternativeName>
        <fullName>H2B-IV</fullName>
    </alternativeName>
</protein>
<reference key="1">
    <citation type="journal article" date="1990" name="Gene">
        <title>Organization and transcription of Volvox histone-encoding genes: similarities between algal and animal genes.</title>
        <authorList>
            <person name="Mueller K."/>
            <person name="Lindauer A."/>
            <person name="Bruederlein M."/>
            <person name="Schmitt R."/>
        </authorList>
    </citation>
    <scope>NUCLEOTIDE SEQUENCE [GENOMIC DNA]</scope>
    <source>
        <strain>f. Nagariensis / HK10</strain>
    </source>
</reference>
<comment type="function">
    <text>Core component of nucleosome. Nucleosomes wrap and compact DNA into chromatin, limiting DNA accessibility to the cellular machineries which require DNA as a template. Histones thereby play a central role in transcription regulation, DNA repair, DNA replication and chromosomal stability. DNA accessibility is regulated via a complex set of post-translational modifications of histones, also called histone code, and nucleosome remodeling.</text>
</comment>
<comment type="subunit">
    <text>The nucleosome is a histone octamer containing two molecules each of H2A, H2B, H3 and H4 assembled in one H3-H4 heterotetramer and two H2A-H2B heterodimers. The octamer wraps approximately 147 bp of DNA.</text>
</comment>
<comment type="subcellular location">
    <subcellularLocation>
        <location>Nucleus</location>
    </subcellularLocation>
    <subcellularLocation>
        <location>Chromosome</location>
    </subcellularLocation>
</comment>
<comment type="PTM">
    <text evidence="1">Monoubiquitinated to form H2BK143ub1; may give a specific tag for epigenetic transcriptional activation.</text>
</comment>
<comment type="similarity">
    <text evidence="3">Belongs to the histone H2B family.</text>
</comment>
<comment type="caution">
    <text evidence="3">To ensure consistency between histone entries, we follow the 'Brno' nomenclature for histone modifications, with positions referring to those used in the literature for the 'closest' model organism. Due to slight variations in histone sequences between organisms and to the presence of initiator methionine in UniProtKB/Swiss-Prot sequences, the actual positions of modified amino acids in the sequence generally differ. In this entry the following conventions are used: H2BK143ub1 = monoubiquitinated Lys-151.</text>
</comment>
<proteinExistence type="inferred from homology"/>
<evidence type="ECO:0000250" key="1"/>
<evidence type="ECO:0000256" key="2">
    <source>
        <dbReference type="SAM" id="MobiDB-lite"/>
    </source>
</evidence>
<evidence type="ECO:0000305" key="3"/>
<dbReference type="EMBL" id="M31922">
    <property type="protein sequence ID" value="AAA34250.1"/>
    <property type="molecule type" value="Genomic_DNA"/>
</dbReference>
<dbReference type="PIR" id="JQ0797">
    <property type="entry name" value="JQ0797"/>
</dbReference>
<dbReference type="SMR" id="P16868"/>
<dbReference type="OMA" id="SRKESYC"/>
<dbReference type="GO" id="GO:0000786">
    <property type="term" value="C:nucleosome"/>
    <property type="evidence" value="ECO:0007669"/>
    <property type="project" value="UniProtKB-KW"/>
</dbReference>
<dbReference type="GO" id="GO:0005634">
    <property type="term" value="C:nucleus"/>
    <property type="evidence" value="ECO:0007669"/>
    <property type="project" value="UniProtKB-SubCell"/>
</dbReference>
<dbReference type="GO" id="GO:0003677">
    <property type="term" value="F:DNA binding"/>
    <property type="evidence" value="ECO:0007669"/>
    <property type="project" value="UniProtKB-KW"/>
</dbReference>
<dbReference type="GO" id="GO:0046982">
    <property type="term" value="F:protein heterodimerization activity"/>
    <property type="evidence" value="ECO:0007669"/>
    <property type="project" value="InterPro"/>
</dbReference>
<dbReference type="GO" id="GO:0030527">
    <property type="term" value="F:structural constituent of chromatin"/>
    <property type="evidence" value="ECO:0007669"/>
    <property type="project" value="InterPro"/>
</dbReference>
<dbReference type="CDD" id="cd22910">
    <property type="entry name" value="HFD_H2B"/>
    <property type="match status" value="1"/>
</dbReference>
<dbReference type="FunFam" id="1.10.20.10:FF:000014">
    <property type="entry name" value="Histone H2B"/>
    <property type="match status" value="1"/>
</dbReference>
<dbReference type="Gene3D" id="1.10.20.10">
    <property type="entry name" value="Histone, subunit A"/>
    <property type="match status" value="1"/>
</dbReference>
<dbReference type="InterPro" id="IPR009072">
    <property type="entry name" value="Histone-fold"/>
</dbReference>
<dbReference type="InterPro" id="IPR007125">
    <property type="entry name" value="Histone_H2A/H2B/H3"/>
</dbReference>
<dbReference type="InterPro" id="IPR000558">
    <property type="entry name" value="Histone_H2B"/>
</dbReference>
<dbReference type="InterPro" id="IPR055333">
    <property type="entry name" value="HISTONE_H2B_site"/>
</dbReference>
<dbReference type="PANTHER" id="PTHR23428">
    <property type="entry name" value="HISTONE H2B"/>
    <property type="match status" value="1"/>
</dbReference>
<dbReference type="Pfam" id="PF00125">
    <property type="entry name" value="Histone"/>
    <property type="match status" value="1"/>
</dbReference>
<dbReference type="PRINTS" id="PR00621">
    <property type="entry name" value="HISTONEH2B"/>
</dbReference>
<dbReference type="SMART" id="SM00427">
    <property type="entry name" value="H2B"/>
    <property type="match status" value="1"/>
</dbReference>
<dbReference type="SUPFAM" id="SSF47113">
    <property type="entry name" value="Histone-fold"/>
    <property type="match status" value="1"/>
</dbReference>
<dbReference type="PROSITE" id="PS00357">
    <property type="entry name" value="HISTONE_H2B"/>
    <property type="match status" value="1"/>
</dbReference>
<feature type="initiator methionine" description="Removed" evidence="1">
    <location>
        <position position="1"/>
    </location>
</feature>
<feature type="chain" id="PRO_0000071923" description="Histone H2B.4">
    <location>
        <begin position="2"/>
        <end position="155"/>
    </location>
</feature>
<feature type="region of interest" description="Disordered" evidence="2">
    <location>
        <begin position="1"/>
        <end position="62"/>
    </location>
</feature>
<feature type="compositionally biased region" description="Basic and acidic residues" evidence="2">
    <location>
        <begin position="1"/>
        <end position="28"/>
    </location>
</feature>
<feature type="compositionally biased region" description="Basic residues" evidence="2">
    <location>
        <begin position="29"/>
        <end position="40"/>
    </location>
</feature>
<feature type="cross-link" description="Glycyl lysine isopeptide (Lys-Gly) (interchain with G-Cter in ubiquitin)" evidence="1">
    <location>
        <position position="151"/>
    </location>
</feature>
<accession>P16868</accession>
<sequence length="155" mass="16842">MAPKTKEEKPASEAVEPKAEAKPKAEKAPKKKEKKAPAKKSAKEPAAGDAAEGDKKKKKAKVAKSETYKLYIYKVLKQVHPDTGISSKAMSIMNSFINDIFEKVATEASKLSRYNKKPTVTSREIQTAVRLVLPGELAKHAVSEGTKAVTKFTSA</sequence>
<name>H2B4_VOLCA</name>
<keyword id="KW-0158">Chromosome</keyword>
<keyword id="KW-0238">DNA-binding</keyword>
<keyword id="KW-1017">Isopeptide bond</keyword>
<keyword id="KW-0544">Nucleosome core</keyword>
<keyword id="KW-0539">Nucleus</keyword>
<keyword id="KW-0832">Ubl conjugation</keyword>